<reference key="1">
    <citation type="journal article" date="2003" name="Nature">
        <title>The genome of a motile marine Synechococcus.</title>
        <authorList>
            <person name="Palenik B."/>
            <person name="Brahamsha B."/>
            <person name="Larimer F.W."/>
            <person name="Land M.L."/>
            <person name="Hauser L."/>
            <person name="Chain P."/>
            <person name="Lamerdin J.E."/>
            <person name="Regala W."/>
            <person name="Allen E.E."/>
            <person name="McCarren J."/>
            <person name="Paulsen I.T."/>
            <person name="Dufresne A."/>
            <person name="Partensky F."/>
            <person name="Webb E.A."/>
            <person name="Waterbury J."/>
        </authorList>
    </citation>
    <scope>NUCLEOTIDE SEQUENCE [LARGE SCALE GENOMIC DNA]</scope>
    <source>
        <strain>WH8102</strain>
    </source>
</reference>
<proteinExistence type="inferred from homology"/>
<name>RS2_PARMW</name>
<sequence length="239" mass="26727">MAVVTLAEMMEAGAHFGHQTRRWNPKMSRYIYCARNGVHIIDLVQTAVCMNNAYKWTRSAARSGKRFLFVGTKKQASEVVALEAARCGAAYVNQRWLGGMLTNWTTMKARIDRLKDLERMESSGAIAMRPKKEGAVLRRELERLQKYLGGLKTMRRLPDVVVLVDQRRESNAVLEARKLDIPLVSMLDTNCDPDLCEVPIPCNDDAVRSVQLVLGRLADAINEGRHGNNEQRGGGDAEG</sequence>
<dbReference type="EMBL" id="BX569692">
    <property type="protein sequence ID" value="CAE07605.1"/>
    <property type="molecule type" value="Genomic_DNA"/>
</dbReference>
<dbReference type="RefSeq" id="WP_011127955.1">
    <property type="nucleotide sequence ID" value="NC_005070.1"/>
</dbReference>
<dbReference type="SMR" id="Q7U795"/>
<dbReference type="STRING" id="84588.SYNW1090"/>
<dbReference type="KEGG" id="syw:SYNW1090"/>
<dbReference type="eggNOG" id="COG0052">
    <property type="taxonomic scope" value="Bacteria"/>
</dbReference>
<dbReference type="HOGENOM" id="CLU_040318_1_2_3"/>
<dbReference type="Proteomes" id="UP000001422">
    <property type="component" value="Chromosome"/>
</dbReference>
<dbReference type="GO" id="GO:0022627">
    <property type="term" value="C:cytosolic small ribosomal subunit"/>
    <property type="evidence" value="ECO:0007669"/>
    <property type="project" value="TreeGrafter"/>
</dbReference>
<dbReference type="GO" id="GO:0003735">
    <property type="term" value="F:structural constituent of ribosome"/>
    <property type="evidence" value="ECO:0007669"/>
    <property type="project" value="InterPro"/>
</dbReference>
<dbReference type="GO" id="GO:0006412">
    <property type="term" value="P:translation"/>
    <property type="evidence" value="ECO:0007669"/>
    <property type="project" value="UniProtKB-UniRule"/>
</dbReference>
<dbReference type="CDD" id="cd01425">
    <property type="entry name" value="RPS2"/>
    <property type="match status" value="1"/>
</dbReference>
<dbReference type="FunFam" id="1.10.287.610:FF:000001">
    <property type="entry name" value="30S ribosomal protein S2"/>
    <property type="match status" value="1"/>
</dbReference>
<dbReference type="Gene3D" id="3.40.50.10490">
    <property type="entry name" value="Glucose-6-phosphate isomerase like protein, domain 1"/>
    <property type="match status" value="1"/>
</dbReference>
<dbReference type="Gene3D" id="1.10.287.610">
    <property type="entry name" value="Helix hairpin bin"/>
    <property type="match status" value="1"/>
</dbReference>
<dbReference type="HAMAP" id="MF_00291_B">
    <property type="entry name" value="Ribosomal_uS2_B"/>
    <property type="match status" value="1"/>
</dbReference>
<dbReference type="InterPro" id="IPR001865">
    <property type="entry name" value="Ribosomal_uS2"/>
</dbReference>
<dbReference type="InterPro" id="IPR005706">
    <property type="entry name" value="Ribosomal_uS2_bac/mit/plastid"/>
</dbReference>
<dbReference type="InterPro" id="IPR018130">
    <property type="entry name" value="Ribosomal_uS2_CS"/>
</dbReference>
<dbReference type="InterPro" id="IPR023591">
    <property type="entry name" value="Ribosomal_uS2_flav_dom_sf"/>
</dbReference>
<dbReference type="NCBIfam" id="TIGR01011">
    <property type="entry name" value="rpsB_bact"/>
    <property type="match status" value="1"/>
</dbReference>
<dbReference type="PANTHER" id="PTHR12534">
    <property type="entry name" value="30S RIBOSOMAL PROTEIN S2 PROKARYOTIC AND ORGANELLAR"/>
    <property type="match status" value="1"/>
</dbReference>
<dbReference type="PANTHER" id="PTHR12534:SF0">
    <property type="entry name" value="SMALL RIBOSOMAL SUBUNIT PROTEIN US2M"/>
    <property type="match status" value="1"/>
</dbReference>
<dbReference type="Pfam" id="PF00318">
    <property type="entry name" value="Ribosomal_S2"/>
    <property type="match status" value="1"/>
</dbReference>
<dbReference type="PRINTS" id="PR00395">
    <property type="entry name" value="RIBOSOMALS2"/>
</dbReference>
<dbReference type="SUPFAM" id="SSF52313">
    <property type="entry name" value="Ribosomal protein S2"/>
    <property type="match status" value="1"/>
</dbReference>
<dbReference type="PROSITE" id="PS00962">
    <property type="entry name" value="RIBOSOMAL_S2_1"/>
    <property type="match status" value="1"/>
</dbReference>
<keyword id="KW-0687">Ribonucleoprotein</keyword>
<keyword id="KW-0689">Ribosomal protein</keyword>
<evidence type="ECO:0000255" key="1">
    <source>
        <dbReference type="HAMAP-Rule" id="MF_00291"/>
    </source>
</evidence>
<evidence type="ECO:0000305" key="2"/>
<comment type="similarity">
    <text evidence="1">Belongs to the universal ribosomal protein uS2 family.</text>
</comment>
<feature type="chain" id="PRO_0000134260" description="Small ribosomal subunit protein uS2">
    <location>
        <begin position="1"/>
        <end position="239"/>
    </location>
</feature>
<gene>
    <name evidence="1" type="primary">rpsB</name>
    <name evidence="1" type="synonym">rps2</name>
    <name type="ordered locus">SYNW1090</name>
</gene>
<organism>
    <name type="scientific">Parasynechococcus marenigrum (strain WH8102)</name>
    <dbReference type="NCBI Taxonomy" id="84588"/>
    <lineage>
        <taxon>Bacteria</taxon>
        <taxon>Bacillati</taxon>
        <taxon>Cyanobacteriota</taxon>
        <taxon>Cyanophyceae</taxon>
        <taxon>Synechococcales</taxon>
        <taxon>Prochlorococcaceae</taxon>
        <taxon>Parasynechococcus</taxon>
        <taxon>Parasynechococcus marenigrum</taxon>
    </lineage>
</organism>
<protein>
    <recommendedName>
        <fullName evidence="1">Small ribosomal subunit protein uS2</fullName>
    </recommendedName>
    <alternativeName>
        <fullName evidence="2">30S ribosomal protein S2</fullName>
    </alternativeName>
</protein>
<accession>Q7U795</accession>